<organism>
    <name type="scientific">Salmonella gallinarum (strain 287/91 / NCTC 13346)</name>
    <dbReference type="NCBI Taxonomy" id="550538"/>
    <lineage>
        <taxon>Bacteria</taxon>
        <taxon>Pseudomonadati</taxon>
        <taxon>Pseudomonadota</taxon>
        <taxon>Gammaproteobacteria</taxon>
        <taxon>Enterobacterales</taxon>
        <taxon>Enterobacteriaceae</taxon>
        <taxon>Salmonella</taxon>
    </lineage>
</organism>
<evidence type="ECO:0000255" key="1">
    <source>
        <dbReference type="HAMAP-Rule" id="MF_01595"/>
    </source>
</evidence>
<evidence type="ECO:0000256" key="2">
    <source>
        <dbReference type="SAM" id="MobiDB-lite"/>
    </source>
</evidence>
<accession>B5REN2</accession>
<name>PNP_SALG2</name>
<sequence>MLNPIVRKFQYGQHTVTLETGMMARQATAAVMVSMDDTAVFVTVVGQKKAKPGQDFFPLTVNYQERTYAAGRIPGSFFRREGRPSEGETLIARLIDRPVRPLFPEGFVNEVQVIATVVSVNPQVNPDIVAMIGASAALSLSGIPFNGPIGAARVGYINDQYVLNPTQDELKESKLDLVVAGTEAAVLMVESEAELLSEDTMLGAVVFGHEQQQVVIQAINDLVKEAGKPRWDWQPEAVNDALNARVAALAESRLSDAYRITDKQERYAQVDVIKSETIEQLIAEDETLDANELGEILHAIEKNVVRSRVLAGEPRIDGREKDMIRGLDVRTGVLPRTHGSALFTRGETQALVTATLGTARDAQVLDELMGERTDSFLFHYNFPPYSVGETGMVGSPKRREIGHGRLAKRGVLAVMPDMDKFPYTVRVVSEITESNGSSSMASVCGASLALMDAGVPIKAAVAGIAMGLVKEGDNYVVLSDILGDEDHLGDMDFKVAGSRDGISALQMDIKIEGITKEIMQVALNQAKGARLHILGVMEQAINAPRGDISEFAPRIHTIKISTDKIKDVIGKGGSVIRALTEETGTTIEIEDDGTVKIAATDGEKAKYAIRRIEEITAEIEVGRIYNGKVTRIVDFGAFVAIGGGKEGLVHISQIADKRVEKVTDYLQMGQEVPVKVLEVDRQGRVRLSIKEATEQSQPAAAPEAPASEQAE</sequence>
<feature type="chain" id="PRO_1000192488" description="Polyribonucleotide nucleotidyltransferase">
    <location>
        <begin position="1"/>
        <end position="711"/>
    </location>
</feature>
<feature type="domain" description="KH" evidence="1">
    <location>
        <begin position="553"/>
        <end position="612"/>
    </location>
</feature>
<feature type="domain" description="S1 motif" evidence="1">
    <location>
        <begin position="622"/>
        <end position="690"/>
    </location>
</feature>
<feature type="region of interest" description="Disordered" evidence="2">
    <location>
        <begin position="690"/>
        <end position="711"/>
    </location>
</feature>
<feature type="compositionally biased region" description="Low complexity" evidence="2">
    <location>
        <begin position="694"/>
        <end position="711"/>
    </location>
</feature>
<feature type="binding site" evidence="1">
    <location>
        <position position="486"/>
    </location>
    <ligand>
        <name>Mg(2+)</name>
        <dbReference type="ChEBI" id="CHEBI:18420"/>
    </ligand>
</feature>
<feature type="binding site" evidence="1">
    <location>
        <position position="492"/>
    </location>
    <ligand>
        <name>Mg(2+)</name>
        <dbReference type="ChEBI" id="CHEBI:18420"/>
    </ligand>
</feature>
<dbReference type="EC" id="2.7.7.8" evidence="1"/>
<dbReference type="EMBL" id="AM933173">
    <property type="protein sequence ID" value="CAR38972.1"/>
    <property type="molecule type" value="Genomic_DNA"/>
</dbReference>
<dbReference type="RefSeq" id="WP_001670767.1">
    <property type="nucleotide sequence ID" value="NC_011274.1"/>
</dbReference>
<dbReference type="SMR" id="B5REN2"/>
<dbReference type="KEGG" id="seg:SG3173"/>
<dbReference type="HOGENOM" id="CLU_004217_2_2_6"/>
<dbReference type="Proteomes" id="UP000008321">
    <property type="component" value="Chromosome"/>
</dbReference>
<dbReference type="GO" id="GO:0005829">
    <property type="term" value="C:cytosol"/>
    <property type="evidence" value="ECO:0007669"/>
    <property type="project" value="TreeGrafter"/>
</dbReference>
<dbReference type="GO" id="GO:0000175">
    <property type="term" value="F:3'-5'-RNA exonuclease activity"/>
    <property type="evidence" value="ECO:0007669"/>
    <property type="project" value="TreeGrafter"/>
</dbReference>
<dbReference type="GO" id="GO:0000287">
    <property type="term" value="F:magnesium ion binding"/>
    <property type="evidence" value="ECO:0007669"/>
    <property type="project" value="UniProtKB-UniRule"/>
</dbReference>
<dbReference type="GO" id="GO:0004654">
    <property type="term" value="F:polyribonucleotide nucleotidyltransferase activity"/>
    <property type="evidence" value="ECO:0007669"/>
    <property type="project" value="UniProtKB-UniRule"/>
</dbReference>
<dbReference type="GO" id="GO:0003723">
    <property type="term" value="F:RNA binding"/>
    <property type="evidence" value="ECO:0007669"/>
    <property type="project" value="UniProtKB-UniRule"/>
</dbReference>
<dbReference type="GO" id="GO:0006402">
    <property type="term" value="P:mRNA catabolic process"/>
    <property type="evidence" value="ECO:0007669"/>
    <property type="project" value="UniProtKB-UniRule"/>
</dbReference>
<dbReference type="GO" id="GO:0006396">
    <property type="term" value="P:RNA processing"/>
    <property type="evidence" value="ECO:0007669"/>
    <property type="project" value="InterPro"/>
</dbReference>
<dbReference type="CDD" id="cd02393">
    <property type="entry name" value="KH-I_PNPase"/>
    <property type="match status" value="1"/>
</dbReference>
<dbReference type="CDD" id="cd11363">
    <property type="entry name" value="RNase_PH_PNPase_1"/>
    <property type="match status" value="1"/>
</dbReference>
<dbReference type="CDD" id="cd11364">
    <property type="entry name" value="RNase_PH_PNPase_2"/>
    <property type="match status" value="1"/>
</dbReference>
<dbReference type="CDD" id="cd04472">
    <property type="entry name" value="S1_PNPase"/>
    <property type="match status" value="1"/>
</dbReference>
<dbReference type="FunFam" id="2.40.50.140:FF:000023">
    <property type="entry name" value="Polyribonucleotide nucleotidyltransferase"/>
    <property type="match status" value="1"/>
</dbReference>
<dbReference type="FunFam" id="3.30.1370.10:FF:000001">
    <property type="entry name" value="Polyribonucleotide nucleotidyltransferase"/>
    <property type="match status" value="1"/>
</dbReference>
<dbReference type="FunFam" id="3.30.230.70:FF:000001">
    <property type="entry name" value="Polyribonucleotide nucleotidyltransferase"/>
    <property type="match status" value="1"/>
</dbReference>
<dbReference type="FunFam" id="3.30.230.70:FF:000002">
    <property type="entry name" value="Polyribonucleotide nucleotidyltransferase"/>
    <property type="match status" value="1"/>
</dbReference>
<dbReference type="Gene3D" id="3.30.230.70">
    <property type="entry name" value="GHMP Kinase, N-terminal domain"/>
    <property type="match status" value="2"/>
</dbReference>
<dbReference type="Gene3D" id="3.30.1370.10">
    <property type="entry name" value="K Homology domain, type 1"/>
    <property type="match status" value="1"/>
</dbReference>
<dbReference type="Gene3D" id="2.40.50.140">
    <property type="entry name" value="Nucleic acid-binding proteins"/>
    <property type="match status" value="1"/>
</dbReference>
<dbReference type="HAMAP" id="MF_01595">
    <property type="entry name" value="PNPase"/>
    <property type="match status" value="1"/>
</dbReference>
<dbReference type="InterPro" id="IPR001247">
    <property type="entry name" value="ExoRNase_PH_dom1"/>
</dbReference>
<dbReference type="InterPro" id="IPR015847">
    <property type="entry name" value="ExoRNase_PH_dom2"/>
</dbReference>
<dbReference type="InterPro" id="IPR036345">
    <property type="entry name" value="ExoRNase_PH_dom2_sf"/>
</dbReference>
<dbReference type="InterPro" id="IPR004087">
    <property type="entry name" value="KH_dom"/>
</dbReference>
<dbReference type="InterPro" id="IPR004088">
    <property type="entry name" value="KH_dom_type_1"/>
</dbReference>
<dbReference type="InterPro" id="IPR036612">
    <property type="entry name" value="KH_dom_type_1_sf"/>
</dbReference>
<dbReference type="InterPro" id="IPR012340">
    <property type="entry name" value="NA-bd_OB-fold"/>
</dbReference>
<dbReference type="InterPro" id="IPR012162">
    <property type="entry name" value="PNPase"/>
</dbReference>
<dbReference type="InterPro" id="IPR027408">
    <property type="entry name" value="PNPase/RNase_PH_dom_sf"/>
</dbReference>
<dbReference type="InterPro" id="IPR015848">
    <property type="entry name" value="PNPase_PH_RNA-bd_bac/org-type"/>
</dbReference>
<dbReference type="InterPro" id="IPR036456">
    <property type="entry name" value="PNPase_PH_RNA-bd_sf"/>
</dbReference>
<dbReference type="InterPro" id="IPR020568">
    <property type="entry name" value="Ribosomal_Su5_D2-typ_SF"/>
</dbReference>
<dbReference type="InterPro" id="IPR003029">
    <property type="entry name" value="S1_domain"/>
</dbReference>
<dbReference type="NCBIfam" id="TIGR03591">
    <property type="entry name" value="polynuc_phos"/>
    <property type="match status" value="1"/>
</dbReference>
<dbReference type="NCBIfam" id="NF008805">
    <property type="entry name" value="PRK11824.1"/>
    <property type="match status" value="1"/>
</dbReference>
<dbReference type="PANTHER" id="PTHR11252">
    <property type="entry name" value="POLYRIBONUCLEOTIDE NUCLEOTIDYLTRANSFERASE"/>
    <property type="match status" value="1"/>
</dbReference>
<dbReference type="PANTHER" id="PTHR11252:SF0">
    <property type="entry name" value="POLYRIBONUCLEOTIDE NUCLEOTIDYLTRANSFERASE 1, MITOCHONDRIAL"/>
    <property type="match status" value="1"/>
</dbReference>
<dbReference type="Pfam" id="PF00013">
    <property type="entry name" value="KH_1"/>
    <property type="match status" value="1"/>
</dbReference>
<dbReference type="Pfam" id="PF03726">
    <property type="entry name" value="PNPase"/>
    <property type="match status" value="1"/>
</dbReference>
<dbReference type="Pfam" id="PF01138">
    <property type="entry name" value="RNase_PH"/>
    <property type="match status" value="2"/>
</dbReference>
<dbReference type="Pfam" id="PF03725">
    <property type="entry name" value="RNase_PH_C"/>
    <property type="match status" value="2"/>
</dbReference>
<dbReference type="Pfam" id="PF00575">
    <property type="entry name" value="S1"/>
    <property type="match status" value="1"/>
</dbReference>
<dbReference type="PIRSF" id="PIRSF005499">
    <property type="entry name" value="PNPase"/>
    <property type="match status" value="1"/>
</dbReference>
<dbReference type="SMART" id="SM00322">
    <property type="entry name" value="KH"/>
    <property type="match status" value="1"/>
</dbReference>
<dbReference type="SMART" id="SM00316">
    <property type="entry name" value="S1"/>
    <property type="match status" value="1"/>
</dbReference>
<dbReference type="SUPFAM" id="SSF54791">
    <property type="entry name" value="Eukaryotic type KH-domain (KH-domain type I)"/>
    <property type="match status" value="1"/>
</dbReference>
<dbReference type="SUPFAM" id="SSF50249">
    <property type="entry name" value="Nucleic acid-binding proteins"/>
    <property type="match status" value="1"/>
</dbReference>
<dbReference type="SUPFAM" id="SSF46915">
    <property type="entry name" value="Polynucleotide phosphorylase/guanosine pentaphosphate synthase (PNPase/GPSI), domain 3"/>
    <property type="match status" value="1"/>
</dbReference>
<dbReference type="SUPFAM" id="SSF55666">
    <property type="entry name" value="Ribonuclease PH domain 2-like"/>
    <property type="match status" value="2"/>
</dbReference>
<dbReference type="SUPFAM" id="SSF54211">
    <property type="entry name" value="Ribosomal protein S5 domain 2-like"/>
    <property type="match status" value="2"/>
</dbReference>
<dbReference type="PROSITE" id="PS50084">
    <property type="entry name" value="KH_TYPE_1"/>
    <property type="match status" value="1"/>
</dbReference>
<dbReference type="PROSITE" id="PS50126">
    <property type="entry name" value="S1"/>
    <property type="match status" value="1"/>
</dbReference>
<gene>
    <name evidence="1" type="primary">pnp</name>
    <name type="ordered locus">SG3173</name>
</gene>
<comment type="function">
    <text evidence="1">Involved in mRNA degradation. Catalyzes the phosphorolysis of single-stranded polyribonucleotides processively in the 3'- to 5'-direction.</text>
</comment>
<comment type="catalytic activity">
    <reaction evidence="1">
        <text>RNA(n+1) + phosphate = RNA(n) + a ribonucleoside 5'-diphosphate</text>
        <dbReference type="Rhea" id="RHEA:22096"/>
        <dbReference type="Rhea" id="RHEA-COMP:14527"/>
        <dbReference type="Rhea" id="RHEA-COMP:17342"/>
        <dbReference type="ChEBI" id="CHEBI:43474"/>
        <dbReference type="ChEBI" id="CHEBI:57930"/>
        <dbReference type="ChEBI" id="CHEBI:140395"/>
        <dbReference type="EC" id="2.7.7.8"/>
    </reaction>
</comment>
<comment type="cofactor">
    <cofactor evidence="1">
        <name>Mg(2+)</name>
        <dbReference type="ChEBI" id="CHEBI:18420"/>
    </cofactor>
</comment>
<comment type="subunit">
    <text evidence="1">Component of the RNA degradosome, which is a multiprotein complex involved in RNA processing and mRNA degradation.</text>
</comment>
<comment type="subcellular location">
    <subcellularLocation>
        <location evidence="1">Cytoplasm</location>
    </subcellularLocation>
</comment>
<comment type="similarity">
    <text evidence="1">Belongs to the polyribonucleotide nucleotidyltransferase family.</text>
</comment>
<proteinExistence type="inferred from homology"/>
<keyword id="KW-0963">Cytoplasm</keyword>
<keyword id="KW-0460">Magnesium</keyword>
<keyword id="KW-0479">Metal-binding</keyword>
<keyword id="KW-0548">Nucleotidyltransferase</keyword>
<keyword id="KW-0694">RNA-binding</keyword>
<keyword id="KW-0808">Transferase</keyword>
<protein>
    <recommendedName>
        <fullName evidence="1">Polyribonucleotide nucleotidyltransferase</fullName>
        <ecNumber evidence="1">2.7.7.8</ecNumber>
    </recommendedName>
    <alternativeName>
        <fullName evidence="1">Polynucleotide phosphorylase</fullName>
        <shortName evidence="1">PNPase</shortName>
    </alternativeName>
</protein>
<reference key="1">
    <citation type="journal article" date="2008" name="Genome Res.">
        <title>Comparative genome analysis of Salmonella enteritidis PT4 and Salmonella gallinarum 287/91 provides insights into evolutionary and host adaptation pathways.</title>
        <authorList>
            <person name="Thomson N.R."/>
            <person name="Clayton D.J."/>
            <person name="Windhorst D."/>
            <person name="Vernikos G."/>
            <person name="Davidson S."/>
            <person name="Churcher C."/>
            <person name="Quail M.A."/>
            <person name="Stevens M."/>
            <person name="Jones M.A."/>
            <person name="Watson M."/>
            <person name="Barron A."/>
            <person name="Layton A."/>
            <person name="Pickard D."/>
            <person name="Kingsley R.A."/>
            <person name="Bignell A."/>
            <person name="Clark L."/>
            <person name="Harris B."/>
            <person name="Ormond D."/>
            <person name="Abdellah Z."/>
            <person name="Brooks K."/>
            <person name="Cherevach I."/>
            <person name="Chillingworth T."/>
            <person name="Woodward J."/>
            <person name="Norberczak H."/>
            <person name="Lord A."/>
            <person name="Arrowsmith C."/>
            <person name="Jagels K."/>
            <person name="Moule S."/>
            <person name="Mungall K."/>
            <person name="Saunders M."/>
            <person name="Whitehead S."/>
            <person name="Chabalgoity J.A."/>
            <person name="Maskell D."/>
            <person name="Humphreys T."/>
            <person name="Roberts M."/>
            <person name="Barrow P.A."/>
            <person name="Dougan G."/>
            <person name="Parkhill J."/>
        </authorList>
    </citation>
    <scope>NUCLEOTIDE SEQUENCE [LARGE SCALE GENOMIC DNA]</scope>
    <source>
        <strain>287/91 / NCTC 13346</strain>
    </source>
</reference>